<comment type="function">
    <text evidence="1">Binds directly to 23S ribosomal RNA and is necessary for the in vitro assembly process of the 50S ribosomal subunit. It is not involved in the protein synthesizing functions of that subunit.</text>
</comment>
<comment type="similarity">
    <text evidence="1">Belongs to the bacterial ribosomal protein bL20 family.</text>
</comment>
<keyword id="KW-0687">Ribonucleoprotein</keyword>
<keyword id="KW-0689">Ribosomal protein</keyword>
<keyword id="KW-0694">RNA-binding</keyword>
<keyword id="KW-0699">rRNA-binding</keyword>
<sequence>MPRVKGGTVTRQRRKKVIKLAKGYYGSKNTLFKVANQQVMKSLMYAFRDRRQKKRDFRKLWITRINAAARMNGLSYSRLMHGLKNAGIEVNRKMLADLAVHDEKAFAELATVAKNNIN</sequence>
<dbReference type="EMBL" id="CP001177">
    <property type="protein sequence ID" value="ACJ78813.1"/>
    <property type="molecule type" value="Genomic_DNA"/>
</dbReference>
<dbReference type="SMR" id="B7HRL2"/>
<dbReference type="KEGG" id="bcr:BCAH187_A4697"/>
<dbReference type="HOGENOM" id="CLU_123265_0_1_9"/>
<dbReference type="Proteomes" id="UP000002214">
    <property type="component" value="Chromosome"/>
</dbReference>
<dbReference type="GO" id="GO:1990904">
    <property type="term" value="C:ribonucleoprotein complex"/>
    <property type="evidence" value="ECO:0007669"/>
    <property type="project" value="UniProtKB-KW"/>
</dbReference>
<dbReference type="GO" id="GO:0005840">
    <property type="term" value="C:ribosome"/>
    <property type="evidence" value="ECO:0007669"/>
    <property type="project" value="UniProtKB-KW"/>
</dbReference>
<dbReference type="GO" id="GO:0019843">
    <property type="term" value="F:rRNA binding"/>
    <property type="evidence" value="ECO:0007669"/>
    <property type="project" value="UniProtKB-UniRule"/>
</dbReference>
<dbReference type="GO" id="GO:0003735">
    <property type="term" value="F:structural constituent of ribosome"/>
    <property type="evidence" value="ECO:0007669"/>
    <property type="project" value="InterPro"/>
</dbReference>
<dbReference type="GO" id="GO:0000027">
    <property type="term" value="P:ribosomal large subunit assembly"/>
    <property type="evidence" value="ECO:0007669"/>
    <property type="project" value="UniProtKB-UniRule"/>
</dbReference>
<dbReference type="GO" id="GO:0006412">
    <property type="term" value="P:translation"/>
    <property type="evidence" value="ECO:0007669"/>
    <property type="project" value="InterPro"/>
</dbReference>
<dbReference type="CDD" id="cd07026">
    <property type="entry name" value="Ribosomal_L20"/>
    <property type="match status" value="1"/>
</dbReference>
<dbReference type="FunFam" id="1.10.1900.20:FF:000001">
    <property type="entry name" value="50S ribosomal protein L20"/>
    <property type="match status" value="1"/>
</dbReference>
<dbReference type="Gene3D" id="6.10.160.10">
    <property type="match status" value="1"/>
</dbReference>
<dbReference type="Gene3D" id="1.10.1900.20">
    <property type="entry name" value="Ribosomal protein L20"/>
    <property type="match status" value="1"/>
</dbReference>
<dbReference type="HAMAP" id="MF_00382">
    <property type="entry name" value="Ribosomal_bL20"/>
    <property type="match status" value="1"/>
</dbReference>
<dbReference type="InterPro" id="IPR005813">
    <property type="entry name" value="Ribosomal_bL20"/>
</dbReference>
<dbReference type="InterPro" id="IPR049946">
    <property type="entry name" value="RIBOSOMAL_L20_CS"/>
</dbReference>
<dbReference type="InterPro" id="IPR035566">
    <property type="entry name" value="Ribosomal_protein_bL20_C"/>
</dbReference>
<dbReference type="NCBIfam" id="TIGR01032">
    <property type="entry name" value="rplT_bact"/>
    <property type="match status" value="1"/>
</dbReference>
<dbReference type="PANTHER" id="PTHR10986">
    <property type="entry name" value="39S RIBOSOMAL PROTEIN L20"/>
    <property type="match status" value="1"/>
</dbReference>
<dbReference type="Pfam" id="PF00453">
    <property type="entry name" value="Ribosomal_L20"/>
    <property type="match status" value="1"/>
</dbReference>
<dbReference type="PRINTS" id="PR00062">
    <property type="entry name" value="RIBOSOMALL20"/>
</dbReference>
<dbReference type="SUPFAM" id="SSF74731">
    <property type="entry name" value="Ribosomal protein L20"/>
    <property type="match status" value="1"/>
</dbReference>
<dbReference type="PROSITE" id="PS00937">
    <property type="entry name" value="RIBOSOMAL_L20"/>
    <property type="match status" value="1"/>
</dbReference>
<protein>
    <recommendedName>
        <fullName evidence="1">Large ribosomal subunit protein bL20</fullName>
    </recommendedName>
    <alternativeName>
        <fullName evidence="2">50S ribosomal protein L20</fullName>
    </alternativeName>
</protein>
<feature type="chain" id="PRO_1000122273" description="Large ribosomal subunit protein bL20">
    <location>
        <begin position="1"/>
        <end position="118"/>
    </location>
</feature>
<name>RL20_BACC7</name>
<evidence type="ECO:0000255" key="1">
    <source>
        <dbReference type="HAMAP-Rule" id="MF_00382"/>
    </source>
</evidence>
<evidence type="ECO:0000305" key="2"/>
<gene>
    <name evidence="1" type="primary">rplT</name>
    <name type="ordered locus">BCAH187_A4697</name>
</gene>
<accession>B7HRL2</accession>
<reference key="1">
    <citation type="submission" date="2008-10" db="EMBL/GenBank/DDBJ databases">
        <title>Genome sequence of Bacillus cereus AH187.</title>
        <authorList>
            <person name="Dodson R.J."/>
            <person name="Durkin A.S."/>
            <person name="Rosovitz M.J."/>
            <person name="Rasko D.A."/>
            <person name="Kolsto A.B."/>
            <person name="Okstad O.A."/>
            <person name="Ravel J."/>
            <person name="Sutton G."/>
        </authorList>
    </citation>
    <scope>NUCLEOTIDE SEQUENCE [LARGE SCALE GENOMIC DNA]</scope>
    <source>
        <strain>AH187</strain>
    </source>
</reference>
<proteinExistence type="inferred from homology"/>
<organism>
    <name type="scientific">Bacillus cereus (strain AH187)</name>
    <dbReference type="NCBI Taxonomy" id="405534"/>
    <lineage>
        <taxon>Bacteria</taxon>
        <taxon>Bacillati</taxon>
        <taxon>Bacillota</taxon>
        <taxon>Bacilli</taxon>
        <taxon>Bacillales</taxon>
        <taxon>Bacillaceae</taxon>
        <taxon>Bacillus</taxon>
        <taxon>Bacillus cereus group</taxon>
    </lineage>
</organism>